<dbReference type="EMBL" id="CP000086">
    <property type="protein sequence ID" value="ABC37527.1"/>
    <property type="molecule type" value="Genomic_DNA"/>
</dbReference>
<dbReference type="RefSeq" id="WP_011402238.1">
    <property type="nucleotide sequence ID" value="NZ_CP008785.1"/>
</dbReference>
<dbReference type="SMR" id="Q2SWZ7"/>
<dbReference type="GeneID" id="45121756"/>
<dbReference type="KEGG" id="bte:BTH_I2028"/>
<dbReference type="HOGENOM" id="CLU_047155_0_2_4"/>
<dbReference type="Proteomes" id="UP000001930">
    <property type="component" value="Chromosome I"/>
</dbReference>
<dbReference type="GO" id="GO:0005737">
    <property type="term" value="C:cytoplasm"/>
    <property type="evidence" value="ECO:0007669"/>
    <property type="project" value="UniProtKB-SubCell"/>
</dbReference>
<dbReference type="GO" id="GO:0003746">
    <property type="term" value="F:translation elongation factor activity"/>
    <property type="evidence" value="ECO:0007669"/>
    <property type="project" value="UniProtKB-UniRule"/>
</dbReference>
<dbReference type="CDD" id="cd14275">
    <property type="entry name" value="UBA_EF-Ts"/>
    <property type="match status" value="1"/>
</dbReference>
<dbReference type="FunFam" id="1.10.286.20:FF:000001">
    <property type="entry name" value="Elongation factor Ts"/>
    <property type="match status" value="1"/>
</dbReference>
<dbReference type="FunFam" id="1.10.8.10:FF:000001">
    <property type="entry name" value="Elongation factor Ts"/>
    <property type="match status" value="1"/>
</dbReference>
<dbReference type="Gene3D" id="1.10.286.20">
    <property type="match status" value="1"/>
</dbReference>
<dbReference type="Gene3D" id="1.10.8.10">
    <property type="entry name" value="DNA helicase RuvA subunit, C-terminal domain"/>
    <property type="match status" value="1"/>
</dbReference>
<dbReference type="Gene3D" id="3.30.479.20">
    <property type="entry name" value="Elongation factor Ts, dimerisation domain"/>
    <property type="match status" value="2"/>
</dbReference>
<dbReference type="HAMAP" id="MF_00050">
    <property type="entry name" value="EF_Ts"/>
    <property type="match status" value="1"/>
</dbReference>
<dbReference type="InterPro" id="IPR036402">
    <property type="entry name" value="EF-Ts_dimer_sf"/>
</dbReference>
<dbReference type="InterPro" id="IPR001816">
    <property type="entry name" value="Transl_elong_EFTs/EF1B"/>
</dbReference>
<dbReference type="InterPro" id="IPR014039">
    <property type="entry name" value="Transl_elong_EFTs/EF1B_dimer"/>
</dbReference>
<dbReference type="InterPro" id="IPR018101">
    <property type="entry name" value="Transl_elong_Ts_CS"/>
</dbReference>
<dbReference type="InterPro" id="IPR009060">
    <property type="entry name" value="UBA-like_sf"/>
</dbReference>
<dbReference type="NCBIfam" id="TIGR00116">
    <property type="entry name" value="tsf"/>
    <property type="match status" value="1"/>
</dbReference>
<dbReference type="PANTHER" id="PTHR11741">
    <property type="entry name" value="ELONGATION FACTOR TS"/>
    <property type="match status" value="1"/>
</dbReference>
<dbReference type="PANTHER" id="PTHR11741:SF0">
    <property type="entry name" value="ELONGATION FACTOR TS, MITOCHONDRIAL"/>
    <property type="match status" value="1"/>
</dbReference>
<dbReference type="Pfam" id="PF00889">
    <property type="entry name" value="EF_TS"/>
    <property type="match status" value="1"/>
</dbReference>
<dbReference type="SUPFAM" id="SSF54713">
    <property type="entry name" value="Elongation factor Ts (EF-Ts), dimerisation domain"/>
    <property type="match status" value="2"/>
</dbReference>
<dbReference type="SUPFAM" id="SSF46934">
    <property type="entry name" value="UBA-like"/>
    <property type="match status" value="1"/>
</dbReference>
<dbReference type="PROSITE" id="PS01127">
    <property type="entry name" value="EF_TS_2"/>
    <property type="match status" value="1"/>
</dbReference>
<organism>
    <name type="scientific">Burkholderia thailandensis (strain ATCC 700388 / DSM 13276 / CCUG 48851 / CIP 106301 / E264)</name>
    <dbReference type="NCBI Taxonomy" id="271848"/>
    <lineage>
        <taxon>Bacteria</taxon>
        <taxon>Pseudomonadati</taxon>
        <taxon>Pseudomonadota</taxon>
        <taxon>Betaproteobacteria</taxon>
        <taxon>Burkholderiales</taxon>
        <taxon>Burkholderiaceae</taxon>
        <taxon>Burkholderia</taxon>
        <taxon>pseudomallei group</taxon>
    </lineage>
</organism>
<accession>Q2SWZ7</accession>
<feature type="chain" id="PRO_0000241469" description="Elongation factor Ts">
    <location>
        <begin position="1"/>
        <end position="293"/>
    </location>
</feature>
<feature type="region of interest" description="Involved in Mg(2+) ion dislocation from EF-Tu" evidence="1">
    <location>
        <begin position="80"/>
        <end position="83"/>
    </location>
</feature>
<protein>
    <recommendedName>
        <fullName evidence="1">Elongation factor Ts</fullName>
        <shortName evidence="1">EF-Ts</shortName>
    </recommendedName>
</protein>
<proteinExistence type="inferred from homology"/>
<sequence>MAAITASMVAELRAKTDAPMMECKKALTEADGDMAKAEELLRVKLGNKASKAASRVTAEGVVASFVGANAGALVELNCETDFVAKNDDFNAFAKTVAELVATQNPADVAALSALPLDGKTVDEVRLALVGKIGENISIRRFVRFETSNKLATYLHGSRIGVIVEYTGEQEQVGKDVAMHVAAMKPVSLSSDDVPAELIEKERRVAEQKAAESGKPAEIVAKMVDGSVQKFLKEVSLLNQPFVKNDKQTIEQMLKASNAAVQKFALFVVGEGIEKRQDDFAAEVAAQVAAAKQQ</sequence>
<name>EFTS_BURTA</name>
<keyword id="KW-0963">Cytoplasm</keyword>
<keyword id="KW-0251">Elongation factor</keyword>
<keyword id="KW-0648">Protein biosynthesis</keyword>
<reference key="1">
    <citation type="journal article" date="2005" name="BMC Genomics">
        <title>Bacterial genome adaptation to niches: divergence of the potential virulence genes in three Burkholderia species of different survival strategies.</title>
        <authorList>
            <person name="Kim H.S."/>
            <person name="Schell M.A."/>
            <person name="Yu Y."/>
            <person name="Ulrich R.L."/>
            <person name="Sarria S.H."/>
            <person name="Nierman W.C."/>
            <person name="DeShazer D."/>
        </authorList>
    </citation>
    <scope>NUCLEOTIDE SEQUENCE [LARGE SCALE GENOMIC DNA]</scope>
    <source>
        <strain>ATCC 700388 / DSM 13276 / CCUG 48851 / CIP 106301 / E264</strain>
    </source>
</reference>
<gene>
    <name evidence="1" type="primary">tsf</name>
    <name type="ordered locus">BTH_I2028</name>
</gene>
<evidence type="ECO:0000255" key="1">
    <source>
        <dbReference type="HAMAP-Rule" id="MF_00050"/>
    </source>
</evidence>
<comment type="function">
    <text evidence="1">Associates with the EF-Tu.GDP complex and induces the exchange of GDP to GTP. It remains bound to the aminoacyl-tRNA.EF-Tu.GTP complex up to the GTP hydrolysis stage on the ribosome.</text>
</comment>
<comment type="subcellular location">
    <subcellularLocation>
        <location evidence="1">Cytoplasm</location>
    </subcellularLocation>
</comment>
<comment type="similarity">
    <text evidence="1">Belongs to the EF-Ts family.</text>
</comment>